<evidence type="ECO:0000255" key="1">
    <source>
        <dbReference type="HAMAP-Rule" id="MF_00251"/>
    </source>
</evidence>
<evidence type="ECO:0000305" key="2"/>
<dbReference type="EMBL" id="DQ864733">
    <property type="protein sequence ID" value="ABI49053.1"/>
    <property type="molecule type" value="Genomic_DNA"/>
</dbReference>
<dbReference type="RefSeq" id="YP_740510.1">
    <property type="nucleotide sequence ID" value="NC_008334.1"/>
</dbReference>
<dbReference type="SMR" id="Q09ME3"/>
<dbReference type="GeneID" id="4271186"/>
<dbReference type="KEGG" id="cit:4271186"/>
<dbReference type="GO" id="GO:0009507">
    <property type="term" value="C:chloroplast"/>
    <property type="evidence" value="ECO:0007669"/>
    <property type="project" value="UniProtKB-SubCell"/>
</dbReference>
<dbReference type="GO" id="GO:1990904">
    <property type="term" value="C:ribonucleoprotein complex"/>
    <property type="evidence" value="ECO:0007669"/>
    <property type="project" value="UniProtKB-KW"/>
</dbReference>
<dbReference type="GO" id="GO:0005840">
    <property type="term" value="C:ribosome"/>
    <property type="evidence" value="ECO:0007669"/>
    <property type="project" value="UniProtKB-KW"/>
</dbReference>
<dbReference type="GO" id="GO:0003735">
    <property type="term" value="F:structural constituent of ribosome"/>
    <property type="evidence" value="ECO:0007669"/>
    <property type="project" value="InterPro"/>
</dbReference>
<dbReference type="GO" id="GO:0006412">
    <property type="term" value="P:translation"/>
    <property type="evidence" value="ECO:0007669"/>
    <property type="project" value="UniProtKB-UniRule"/>
</dbReference>
<dbReference type="HAMAP" id="MF_00251">
    <property type="entry name" value="Ribosomal_bL36"/>
    <property type="match status" value="1"/>
</dbReference>
<dbReference type="InterPro" id="IPR000473">
    <property type="entry name" value="Ribosomal_bL36"/>
</dbReference>
<dbReference type="InterPro" id="IPR035977">
    <property type="entry name" value="Ribosomal_bL36_sp"/>
</dbReference>
<dbReference type="NCBIfam" id="TIGR01022">
    <property type="entry name" value="rpmJ_bact"/>
    <property type="match status" value="1"/>
</dbReference>
<dbReference type="PANTHER" id="PTHR42888">
    <property type="entry name" value="50S RIBOSOMAL PROTEIN L36, CHLOROPLASTIC"/>
    <property type="match status" value="1"/>
</dbReference>
<dbReference type="PANTHER" id="PTHR42888:SF1">
    <property type="entry name" value="LARGE RIBOSOMAL SUBUNIT PROTEIN BL36C"/>
    <property type="match status" value="1"/>
</dbReference>
<dbReference type="Pfam" id="PF00444">
    <property type="entry name" value="Ribosomal_L36"/>
    <property type="match status" value="1"/>
</dbReference>
<dbReference type="SUPFAM" id="SSF57840">
    <property type="entry name" value="Ribosomal protein L36"/>
    <property type="match status" value="1"/>
</dbReference>
<dbReference type="PROSITE" id="PS00828">
    <property type="entry name" value="RIBOSOMAL_L36"/>
    <property type="match status" value="1"/>
</dbReference>
<reference key="1">
    <citation type="journal article" date="2006" name="BMC Plant Biol.">
        <title>The complete chloroplast genome sequence of Citrus sinensis (L.) Osbeck var 'Ridge Pineapple': organization and phylogenetic relationships to other angiosperms.</title>
        <authorList>
            <person name="Bausher M.G."/>
            <person name="Singh N.D."/>
            <person name="Lee S.-B."/>
            <person name="Jansen R.K."/>
            <person name="Daniell H."/>
        </authorList>
    </citation>
    <scope>NUCLEOTIDE SEQUENCE [LARGE SCALE GENOMIC DNA]</scope>
    <source>
        <strain>cv. Osbeck var. Ridge Pineapple</strain>
    </source>
</reference>
<organism>
    <name type="scientific">Citrus sinensis</name>
    <name type="common">Sweet orange</name>
    <name type="synonym">Citrus aurantium var. sinensis</name>
    <dbReference type="NCBI Taxonomy" id="2711"/>
    <lineage>
        <taxon>Eukaryota</taxon>
        <taxon>Viridiplantae</taxon>
        <taxon>Streptophyta</taxon>
        <taxon>Embryophyta</taxon>
        <taxon>Tracheophyta</taxon>
        <taxon>Spermatophyta</taxon>
        <taxon>Magnoliopsida</taxon>
        <taxon>eudicotyledons</taxon>
        <taxon>Gunneridae</taxon>
        <taxon>Pentapetalae</taxon>
        <taxon>rosids</taxon>
        <taxon>malvids</taxon>
        <taxon>Sapindales</taxon>
        <taxon>Rutaceae</taxon>
        <taxon>Aurantioideae</taxon>
        <taxon>Citrus</taxon>
    </lineage>
</organism>
<geneLocation type="chloroplast"/>
<accession>Q09ME3</accession>
<comment type="subcellular location">
    <subcellularLocation>
        <location>Plastid</location>
        <location>Chloroplast</location>
    </subcellularLocation>
</comment>
<comment type="similarity">
    <text evidence="1">Belongs to the bacterial ribosomal protein bL36 family.</text>
</comment>
<keyword id="KW-0150">Chloroplast</keyword>
<keyword id="KW-0934">Plastid</keyword>
<keyword id="KW-0687">Ribonucleoprotein</keyword>
<keyword id="KW-0689">Ribosomal protein</keyword>
<gene>
    <name evidence="1" type="primary">rpl36</name>
</gene>
<proteinExistence type="inferred from homology"/>
<sequence length="37" mass="4460">MKIRASVRKICEKCRLIRRRGRIIVICSNPRHKQRQG</sequence>
<name>RK36_CITSI</name>
<feature type="chain" id="PRO_0000276811" description="Large ribosomal subunit protein bL36c">
    <location>
        <begin position="1"/>
        <end position="37"/>
    </location>
</feature>
<protein>
    <recommendedName>
        <fullName evidence="1">Large ribosomal subunit protein bL36c</fullName>
    </recommendedName>
    <alternativeName>
        <fullName evidence="2">50S ribosomal protein L36, chloroplastic</fullName>
    </alternativeName>
</protein>